<accession>Q9LSY9</accession>
<accession>Q9ASY6</accession>
<proteinExistence type="evidence at transcript level"/>
<evidence type="ECO:0000250" key="1">
    <source>
        <dbReference type="UniProtKB" id="A0A0A1HA03"/>
    </source>
</evidence>
<evidence type="ECO:0000250" key="2">
    <source>
        <dbReference type="UniProtKB" id="P51094"/>
    </source>
</evidence>
<evidence type="ECO:0000269" key="3">
    <source>
    </source>
</evidence>
<evidence type="ECO:0000269" key="4">
    <source>
    </source>
</evidence>
<evidence type="ECO:0000305" key="5"/>
<gene>
    <name type="primary">UGT71B1</name>
    <name type="ordered locus">At3g21750</name>
    <name type="ORF">MSD21.6</name>
    <name type="ORF">MSD21.8</name>
</gene>
<protein>
    <recommendedName>
        <fullName>UDP-glycosyltransferase 71B1</fullName>
        <ecNumber>2.4.1.-</ecNumber>
    </recommendedName>
    <alternativeName>
        <fullName>Flavonol 3-O-glucosyltransferase UGT71B1</fullName>
        <ecNumber>2.4.1.91</ecNumber>
    </alternativeName>
</protein>
<sequence>MKVELVFIPSPGVGHIRATTALAKLLVASDNRLSVTLIVIPSRVSDDASSSVYTNSEDRLRYILLPARDQTTDLVSYIDSQKPQVRAVVSKVAGDVSTRSDSRLAGIVVDMFCTSMIDIADEFNLSAYIFYTSNASYLGLQFHVQSLYDEKELDVSEFKDTEMKFDVPTLTQPFPAKCLPSVMLNKKWFPYVLGRARSFRATKGILVNSVADMEPQALSFFSGGNGNTNIPPVYAVGPIMDLESSGDEEKRKEILHWLKEQPTKSVVFLCFGSMGGFSEEQAREIAVALERSGHRFLWSLRRASPVGNKSNPPPGEFTNLEEILPKGFLDRTVEIGKIISWAPQVDVLNSPAIGAFVTHCGWNSILESLWFGVPMAAWPIYAEQQFNAFHMVDELGLAAEVKKEYRRDFLVEEPEIVTADEIERGIKCAMEQDSKMRKRVMEMKDKLHVALVDGGSSNCALKKFVQDVVDNVP</sequence>
<dbReference type="EC" id="2.4.1.-"/>
<dbReference type="EC" id="2.4.1.91"/>
<dbReference type="EMBL" id="AB025634">
    <property type="protein sequence ID" value="BAB02837.1"/>
    <property type="molecule type" value="Genomic_DNA"/>
</dbReference>
<dbReference type="EMBL" id="CP002686">
    <property type="protein sequence ID" value="AEE76548.1"/>
    <property type="molecule type" value="Genomic_DNA"/>
</dbReference>
<dbReference type="EMBL" id="AF361596">
    <property type="protein sequence ID" value="AAK32764.1"/>
    <property type="status" value="ALT_FRAME"/>
    <property type="molecule type" value="mRNA"/>
</dbReference>
<dbReference type="EMBL" id="AK227147">
    <property type="protein sequence ID" value="BAE99192.1"/>
    <property type="molecule type" value="mRNA"/>
</dbReference>
<dbReference type="RefSeq" id="NP_188812.1">
    <property type="nucleotide sequence ID" value="NM_113070.3"/>
</dbReference>
<dbReference type="SMR" id="Q9LSY9"/>
<dbReference type="FunCoup" id="Q9LSY9">
    <property type="interactions" value="223"/>
</dbReference>
<dbReference type="STRING" id="3702.Q9LSY9"/>
<dbReference type="CAZy" id="GT1">
    <property type="family name" value="Glycosyltransferase Family 1"/>
</dbReference>
<dbReference type="PaxDb" id="3702-AT3G21750.1"/>
<dbReference type="ProteomicsDB" id="228638"/>
<dbReference type="DNASU" id="821729"/>
<dbReference type="EnsemblPlants" id="AT3G21750.1">
    <property type="protein sequence ID" value="AT3G21750.1"/>
    <property type="gene ID" value="AT3G21750"/>
</dbReference>
<dbReference type="GeneID" id="821729"/>
<dbReference type="Gramene" id="AT3G21750.1">
    <property type="protein sequence ID" value="AT3G21750.1"/>
    <property type="gene ID" value="AT3G21750"/>
</dbReference>
<dbReference type="KEGG" id="ath:AT3G21750"/>
<dbReference type="Araport" id="AT3G21750"/>
<dbReference type="TAIR" id="AT3G21750">
    <property type="gene designation" value="UGT71B1"/>
</dbReference>
<dbReference type="eggNOG" id="KOG1192">
    <property type="taxonomic scope" value="Eukaryota"/>
</dbReference>
<dbReference type="HOGENOM" id="CLU_001724_3_2_1"/>
<dbReference type="InParanoid" id="Q9LSY9"/>
<dbReference type="OMA" id="CAMEQDS"/>
<dbReference type="PhylomeDB" id="Q9LSY9"/>
<dbReference type="BioCyc" id="ARA:AT3G21750-MONOMER"/>
<dbReference type="BioCyc" id="MetaCyc:AT3G21750-MONOMER"/>
<dbReference type="PRO" id="PR:Q9LSY9"/>
<dbReference type="Proteomes" id="UP000006548">
    <property type="component" value="Chromosome 3"/>
</dbReference>
<dbReference type="ExpressionAtlas" id="Q9LSY9">
    <property type="expression patterns" value="baseline and differential"/>
</dbReference>
<dbReference type="GO" id="GO:0047893">
    <property type="term" value="F:flavonol 3-O-glucosyltransferase activity"/>
    <property type="evidence" value="ECO:0007669"/>
    <property type="project" value="UniProtKB-EC"/>
</dbReference>
<dbReference type="GO" id="GO:0080043">
    <property type="term" value="F:quercetin 3-O-glucosyltransferase activity"/>
    <property type="evidence" value="ECO:0000314"/>
    <property type="project" value="TAIR"/>
</dbReference>
<dbReference type="GO" id="GO:0035251">
    <property type="term" value="F:UDP-glucosyltransferase activity"/>
    <property type="evidence" value="ECO:0000314"/>
    <property type="project" value="TAIR"/>
</dbReference>
<dbReference type="CDD" id="cd03784">
    <property type="entry name" value="GT1_Gtf-like"/>
    <property type="match status" value="1"/>
</dbReference>
<dbReference type="FunFam" id="3.40.50.2000:FF:000056">
    <property type="entry name" value="Glycosyltransferase"/>
    <property type="match status" value="1"/>
</dbReference>
<dbReference type="Gene3D" id="3.40.50.2000">
    <property type="entry name" value="Glycogen Phosphorylase B"/>
    <property type="match status" value="2"/>
</dbReference>
<dbReference type="InterPro" id="IPR050481">
    <property type="entry name" value="UDP-glycosyltransf_plant"/>
</dbReference>
<dbReference type="InterPro" id="IPR002213">
    <property type="entry name" value="UDP_glucos_trans"/>
</dbReference>
<dbReference type="InterPro" id="IPR035595">
    <property type="entry name" value="UDP_glycos_trans_CS"/>
</dbReference>
<dbReference type="PANTHER" id="PTHR48048">
    <property type="entry name" value="GLYCOSYLTRANSFERASE"/>
    <property type="match status" value="1"/>
</dbReference>
<dbReference type="PANTHER" id="PTHR48048:SF45">
    <property type="entry name" value="GLYCOSYLTRANSFERASE"/>
    <property type="match status" value="1"/>
</dbReference>
<dbReference type="Pfam" id="PF00201">
    <property type="entry name" value="UDPGT"/>
    <property type="match status" value="1"/>
</dbReference>
<dbReference type="SUPFAM" id="SSF53756">
    <property type="entry name" value="UDP-Glycosyltransferase/glycogen phosphorylase"/>
    <property type="match status" value="1"/>
</dbReference>
<dbReference type="PROSITE" id="PS00375">
    <property type="entry name" value="UDPGT"/>
    <property type="match status" value="1"/>
</dbReference>
<feature type="chain" id="PRO_0000409047" description="UDP-glycosyltransferase 71B1">
    <location>
        <begin position="1"/>
        <end position="473"/>
    </location>
</feature>
<feature type="active site" description="Proton acceptor" evidence="1">
    <location>
        <position position="15"/>
    </location>
</feature>
<feature type="active site" description="Charge relay" evidence="1">
    <location>
        <position position="110"/>
    </location>
</feature>
<feature type="binding site" evidence="2">
    <location>
        <position position="15"/>
    </location>
    <ligand>
        <name>an anthocyanidin</name>
        <dbReference type="ChEBI" id="CHEBI:143576"/>
    </ligand>
</feature>
<feature type="binding site" evidence="1">
    <location>
        <position position="132"/>
    </location>
    <ligand>
        <name>UDP-alpha-D-glucose</name>
        <dbReference type="ChEBI" id="CHEBI:58885"/>
    </ligand>
</feature>
<feature type="binding site" evidence="1">
    <location>
        <position position="342"/>
    </location>
    <ligand>
        <name>UDP-alpha-D-glucose</name>
        <dbReference type="ChEBI" id="CHEBI:58885"/>
    </ligand>
</feature>
<feature type="binding site" evidence="1">
    <location>
        <position position="344"/>
    </location>
    <ligand>
        <name>UDP-alpha-D-glucose</name>
        <dbReference type="ChEBI" id="CHEBI:58885"/>
    </ligand>
</feature>
<feature type="binding site" evidence="1">
    <location>
        <position position="359"/>
    </location>
    <ligand>
        <name>UDP-alpha-D-glucose</name>
        <dbReference type="ChEBI" id="CHEBI:58885"/>
    </ligand>
</feature>
<feature type="binding site" evidence="1">
    <location>
        <position position="362"/>
    </location>
    <ligand>
        <name>UDP-alpha-D-glucose</name>
        <dbReference type="ChEBI" id="CHEBI:58885"/>
    </ligand>
</feature>
<feature type="binding site" evidence="1">
    <location>
        <position position="363"/>
    </location>
    <ligand>
        <name>UDP-alpha-D-glucose</name>
        <dbReference type="ChEBI" id="CHEBI:58885"/>
    </ligand>
</feature>
<feature type="binding site" evidence="1">
    <location>
        <position position="364"/>
    </location>
    <ligand>
        <name>UDP-alpha-D-glucose</name>
        <dbReference type="ChEBI" id="CHEBI:58885"/>
    </ligand>
</feature>
<feature type="binding site" evidence="1">
    <location>
        <position position="367"/>
    </location>
    <ligand>
        <name>UDP-alpha-D-glucose</name>
        <dbReference type="ChEBI" id="CHEBI:58885"/>
    </ligand>
</feature>
<feature type="binding site" evidence="2">
    <location>
        <position position="382"/>
    </location>
    <ligand>
        <name>an anthocyanidin</name>
        <dbReference type="ChEBI" id="CHEBI:143576"/>
    </ligand>
</feature>
<feature type="binding site" evidence="1">
    <location>
        <position position="383"/>
    </location>
    <ligand>
        <name>UDP-alpha-D-glucose</name>
        <dbReference type="ChEBI" id="CHEBI:58885"/>
    </ligand>
</feature>
<feature type="binding site" evidence="1">
    <location>
        <position position="384"/>
    </location>
    <ligand>
        <name>UDP-alpha-D-glucose</name>
        <dbReference type="ChEBI" id="CHEBI:58885"/>
    </ligand>
</feature>
<organism>
    <name type="scientific">Arabidopsis thaliana</name>
    <name type="common">Mouse-ear cress</name>
    <dbReference type="NCBI Taxonomy" id="3702"/>
    <lineage>
        <taxon>Eukaryota</taxon>
        <taxon>Viridiplantae</taxon>
        <taxon>Streptophyta</taxon>
        <taxon>Embryophyta</taxon>
        <taxon>Tracheophyta</taxon>
        <taxon>Spermatophyta</taxon>
        <taxon>Magnoliopsida</taxon>
        <taxon>eudicotyledons</taxon>
        <taxon>Gunneridae</taxon>
        <taxon>Pentapetalae</taxon>
        <taxon>rosids</taxon>
        <taxon>malvids</taxon>
        <taxon>Brassicales</taxon>
        <taxon>Brassicaceae</taxon>
        <taxon>Camelineae</taxon>
        <taxon>Arabidopsis</taxon>
    </lineage>
</organism>
<comment type="function">
    <text evidence="3 4">Possesses quercetin 3-O-glucosyltransferase activity in vitro. Also active in vitro on benzoates and benzoate derivatives.</text>
</comment>
<comment type="catalytic activity">
    <reaction>
        <text>a flavonol + UDP-alpha-D-glucose = a flavonol 3-O-beta-D-glucoside + UDP + H(+)</text>
        <dbReference type="Rhea" id="RHEA:22300"/>
        <dbReference type="ChEBI" id="CHEBI:15378"/>
        <dbReference type="ChEBI" id="CHEBI:16816"/>
        <dbReference type="ChEBI" id="CHEBI:28802"/>
        <dbReference type="ChEBI" id="CHEBI:58223"/>
        <dbReference type="ChEBI" id="CHEBI:58885"/>
        <dbReference type="EC" id="2.4.1.91"/>
    </reaction>
</comment>
<comment type="similarity">
    <text evidence="5">Belongs to the UDP-glycosyltransferase family.</text>
</comment>
<comment type="sequence caution" evidence="5">
    <conflict type="frameshift">
        <sequence resource="EMBL-CDS" id="AAK32764"/>
    </conflict>
</comment>
<reference key="1">
    <citation type="journal article" date="2000" name="DNA Res.">
        <title>Structural analysis of Arabidopsis thaliana chromosome 3. I. Sequence features of the regions of 4,504,864 bp covered by sixty P1 and TAC clones.</title>
        <authorList>
            <person name="Sato S."/>
            <person name="Nakamura Y."/>
            <person name="Kaneko T."/>
            <person name="Katoh T."/>
            <person name="Asamizu E."/>
            <person name="Tabata S."/>
        </authorList>
    </citation>
    <scope>NUCLEOTIDE SEQUENCE [LARGE SCALE GENOMIC DNA]</scope>
    <source>
        <strain>cv. Columbia</strain>
    </source>
</reference>
<reference key="2">
    <citation type="journal article" date="2017" name="Plant J.">
        <title>Araport11: a complete reannotation of the Arabidopsis thaliana reference genome.</title>
        <authorList>
            <person name="Cheng C.Y."/>
            <person name="Krishnakumar V."/>
            <person name="Chan A.P."/>
            <person name="Thibaud-Nissen F."/>
            <person name="Schobel S."/>
            <person name="Town C.D."/>
        </authorList>
    </citation>
    <scope>GENOME REANNOTATION</scope>
    <source>
        <strain>cv. Columbia</strain>
    </source>
</reference>
<reference key="3">
    <citation type="journal article" date="2003" name="Science">
        <title>Empirical analysis of transcriptional activity in the Arabidopsis genome.</title>
        <authorList>
            <person name="Yamada K."/>
            <person name="Lim J."/>
            <person name="Dale J.M."/>
            <person name="Chen H."/>
            <person name="Shinn P."/>
            <person name="Palm C.J."/>
            <person name="Southwick A.M."/>
            <person name="Wu H.C."/>
            <person name="Kim C.J."/>
            <person name="Nguyen M."/>
            <person name="Pham P.K."/>
            <person name="Cheuk R.F."/>
            <person name="Karlin-Newmann G."/>
            <person name="Liu S.X."/>
            <person name="Lam B."/>
            <person name="Sakano H."/>
            <person name="Wu T."/>
            <person name="Yu G."/>
            <person name="Miranda M."/>
            <person name="Quach H.L."/>
            <person name="Tripp M."/>
            <person name="Chang C.H."/>
            <person name="Lee J.M."/>
            <person name="Toriumi M.J."/>
            <person name="Chan M.M."/>
            <person name="Tang C.C."/>
            <person name="Onodera C.S."/>
            <person name="Deng J.M."/>
            <person name="Akiyama K."/>
            <person name="Ansari Y."/>
            <person name="Arakawa T."/>
            <person name="Banh J."/>
            <person name="Banno F."/>
            <person name="Bowser L."/>
            <person name="Brooks S.Y."/>
            <person name="Carninci P."/>
            <person name="Chao Q."/>
            <person name="Choy N."/>
            <person name="Enju A."/>
            <person name="Goldsmith A.D."/>
            <person name="Gurjal M."/>
            <person name="Hansen N.F."/>
            <person name="Hayashizaki Y."/>
            <person name="Johnson-Hopson C."/>
            <person name="Hsuan V.W."/>
            <person name="Iida K."/>
            <person name="Karnes M."/>
            <person name="Khan S."/>
            <person name="Koesema E."/>
            <person name="Ishida J."/>
            <person name="Jiang P.X."/>
            <person name="Jones T."/>
            <person name="Kawai J."/>
            <person name="Kamiya A."/>
            <person name="Meyers C."/>
            <person name="Nakajima M."/>
            <person name="Narusaka M."/>
            <person name="Seki M."/>
            <person name="Sakurai T."/>
            <person name="Satou M."/>
            <person name="Tamse R."/>
            <person name="Vaysberg M."/>
            <person name="Wallender E.K."/>
            <person name="Wong C."/>
            <person name="Yamamura Y."/>
            <person name="Yuan S."/>
            <person name="Shinozaki K."/>
            <person name="Davis R.W."/>
            <person name="Theologis A."/>
            <person name="Ecker J.R."/>
        </authorList>
    </citation>
    <scope>NUCLEOTIDE SEQUENCE [LARGE SCALE MRNA]</scope>
    <source>
        <strain>cv. Columbia</strain>
    </source>
</reference>
<reference key="4">
    <citation type="submission" date="2006-07" db="EMBL/GenBank/DDBJ databases">
        <title>Large-scale analysis of RIKEN Arabidopsis full-length (RAFL) cDNAs.</title>
        <authorList>
            <person name="Totoki Y."/>
            <person name="Seki M."/>
            <person name="Ishida J."/>
            <person name="Nakajima M."/>
            <person name="Enju A."/>
            <person name="Kamiya A."/>
            <person name="Narusaka M."/>
            <person name="Shin-i T."/>
            <person name="Nakagawa M."/>
            <person name="Sakamoto N."/>
            <person name="Oishi K."/>
            <person name="Kohara Y."/>
            <person name="Kobayashi M."/>
            <person name="Toyoda A."/>
            <person name="Sakaki Y."/>
            <person name="Sakurai T."/>
            <person name="Iida K."/>
            <person name="Akiyama K."/>
            <person name="Satou M."/>
            <person name="Toyoda T."/>
            <person name="Konagaya A."/>
            <person name="Carninci P."/>
            <person name="Kawai J."/>
            <person name="Hayashizaki Y."/>
            <person name="Shinozaki K."/>
        </authorList>
    </citation>
    <scope>NUCLEOTIDE SEQUENCE [LARGE SCALE MRNA]</scope>
    <source>
        <strain>cv. Columbia</strain>
    </source>
</reference>
<reference key="5">
    <citation type="journal article" date="2001" name="J. Biol. Chem.">
        <title>Phylogenetic analysis of the UDP-glycosyltransferase multigene family of Arabidopsis thaliana.</title>
        <authorList>
            <person name="Li Y."/>
            <person name="Baldauf S."/>
            <person name="Lim E.K."/>
            <person name="Bowles D.J."/>
        </authorList>
    </citation>
    <scope>GENE FAMILY</scope>
</reference>
<reference key="6">
    <citation type="journal article" date="2002" name="J. Biol. Chem.">
        <title>The activity of Arabidopsis glycosyltransferases toward salicylic acid, 4-hydroxybenzoic acid, and other benzoates.</title>
        <authorList>
            <person name="Lim E.K."/>
            <person name="Doucet C.J."/>
            <person name="Li Y."/>
            <person name="Elias L."/>
            <person name="Worrall D."/>
            <person name="Spencer S.P."/>
            <person name="Ross J."/>
            <person name="Bowles D.J."/>
        </authorList>
    </citation>
    <scope>FUNCTION</scope>
</reference>
<reference key="7">
    <citation type="journal article" date="2004" name="Biotechnol. Bioeng.">
        <title>Arabidopsis glycosyltransferases as biocatalysts in fermentation for regioselective synthesis of diverse quercetin glucosides.</title>
        <authorList>
            <person name="Lim E.K."/>
            <person name="Ashford D.A."/>
            <person name="Hou B."/>
            <person name="Jackson R.G."/>
            <person name="Bowles D.J."/>
        </authorList>
    </citation>
    <scope>FUNCTION</scope>
</reference>
<keyword id="KW-0328">Glycosyltransferase</keyword>
<keyword id="KW-1185">Reference proteome</keyword>
<keyword id="KW-0808">Transferase</keyword>
<name>U71B1_ARATH</name>